<name>LRL28_ARATH</name>
<gene>
    <name evidence="5" type="primary">LRK10L-2.8</name>
    <name evidence="7" type="ordered locus">At1g67000</name>
    <name evidence="8" type="ORF">F1O19.18</name>
</gene>
<sequence length="892" mass="99410">MYYHSLSSYSILFFLFSLFHHLPCASSNQGLGWCESLFQCGNITADFPFWGGNRHKPCGHPLLELHCNNNNITSLYISNQEFYVRQINQTSNTLTLARSDLLGSFCSSYAYNTTTLPPEIFELSPTYKSLTVLYHCDPKLSYRSSYTCPALGTFSMSQSVDYQYSCQNSFTVNVPTSFHPEERGLNLTNLESALRKGFEVKLVIDEIPCQQCSSTRGICSFNGTTQSCCNATSPSGGVSCVPYQHSADEVYRRCSESFSCGSQRDLNYPLWKPGREECGHPNFKLNCSGGFAEINIASVKFRILDSYRSLIRLARSDYIGDLCPANPLTAPFIEKFLPVLELTGETELLTLYYGCRFNSSDIPANIYVGELGCDEGRSYYVTRNLSSPLLDSSRGVLNNLREMCKRNVSVPASGPALFDLQTRPNQDNLKMALDQGFRMLITSDCERCRGSGGACGYNQTSSGFGCYCKDGKCGYEYDDGFFRRHRRFIATLVRYTFIALGALTGVVIVFLVLLCPCFRVQIFRKRKTSDEVRLQKLKALIPLKHYTYAEVKKMTKSFTEVVGRGGFGIVYSGTLSDSSMVAVKVLKDSKGTDGEDFINEVASMSQTSHVNIVSLLGFCCEGSRRAIIYEFLGNGSLDKFISDKSSVNLDLKTLYGIALGVARGLEYLHYGCKTRIVHFDIKPQNVLLDDNLCPKVSDFGLAKLCEKKESILSLLDTRGTIGYIAPEMISRLYGSVSHKSDVYSYGMLVLEMIGARKKERFDQNSRSDGSSIYFPEWIYKDLEKANIKDIEKTENGGLIENGISSEEEEIARKMTLVGLWCIQSSPSDRPPMNKVVEMMEGSLDALEVPPRPVLQQISASSVSDSFWNSEESSSASDILVFSTNSKLESSSL</sequence>
<comment type="catalytic activity">
    <reaction>
        <text>L-seryl-[protein] + ATP = O-phospho-L-seryl-[protein] + ADP + H(+)</text>
        <dbReference type="Rhea" id="RHEA:17989"/>
        <dbReference type="Rhea" id="RHEA-COMP:9863"/>
        <dbReference type="Rhea" id="RHEA-COMP:11604"/>
        <dbReference type="ChEBI" id="CHEBI:15378"/>
        <dbReference type="ChEBI" id="CHEBI:29999"/>
        <dbReference type="ChEBI" id="CHEBI:30616"/>
        <dbReference type="ChEBI" id="CHEBI:83421"/>
        <dbReference type="ChEBI" id="CHEBI:456216"/>
        <dbReference type="EC" id="2.7.11.1"/>
    </reaction>
</comment>
<comment type="catalytic activity">
    <reaction>
        <text>L-threonyl-[protein] + ATP = O-phospho-L-threonyl-[protein] + ADP + H(+)</text>
        <dbReference type="Rhea" id="RHEA:46608"/>
        <dbReference type="Rhea" id="RHEA-COMP:11060"/>
        <dbReference type="Rhea" id="RHEA-COMP:11605"/>
        <dbReference type="ChEBI" id="CHEBI:15378"/>
        <dbReference type="ChEBI" id="CHEBI:30013"/>
        <dbReference type="ChEBI" id="CHEBI:30616"/>
        <dbReference type="ChEBI" id="CHEBI:61977"/>
        <dbReference type="ChEBI" id="CHEBI:456216"/>
        <dbReference type="EC" id="2.7.11.1"/>
    </reaction>
</comment>
<comment type="subcellular location">
    <subcellularLocation>
        <location evidence="2">Membrane</location>
        <topology evidence="6">Single-pass type I membrane protein</topology>
    </subcellularLocation>
</comment>
<comment type="similarity">
    <text evidence="3">Belongs to the protein kinase superfamily. Ser/Thr protein kinase family.</text>
</comment>
<comment type="sequence caution" evidence="6">
    <conflict type="frameshift">
        <sequence resource="EMBL" id="AK226799"/>
    </conflict>
</comment>
<evidence type="ECO:0000250" key="1">
    <source>
        <dbReference type="UniProtKB" id="O48814"/>
    </source>
</evidence>
<evidence type="ECO:0000255" key="2"/>
<evidence type="ECO:0000255" key="3">
    <source>
        <dbReference type="PROSITE-ProRule" id="PRU00159"/>
    </source>
</evidence>
<evidence type="ECO:0000255" key="4">
    <source>
        <dbReference type="PROSITE-ProRule" id="PRU10027"/>
    </source>
</evidence>
<evidence type="ECO:0000303" key="5">
    <source>
    </source>
</evidence>
<evidence type="ECO:0000305" key="6"/>
<evidence type="ECO:0000312" key="7">
    <source>
        <dbReference type="Araport" id="AT1G67000"/>
    </source>
</evidence>
<evidence type="ECO:0000312" key="8">
    <source>
        <dbReference type="EMBL" id="AC007152"/>
    </source>
</evidence>
<protein>
    <recommendedName>
        <fullName evidence="5">LEAF RUST 10 DISEASE-RESISTANCE LOCUS RECEPTOR-LIKE PROTEIN KINASE-like 2.8</fullName>
        <ecNumber>2.7.11.1</ecNumber>
    </recommendedName>
    <alternativeName>
        <fullName evidence="6">Probable receptor-like serine/threonine-protein kinase LRK10L-2.8</fullName>
    </alternativeName>
</protein>
<accession>Q3ECH2</accession>
<organism>
    <name type="scientific">Arabidopsis thaliana</name>
    <name type="common">Mouse-ear cress</name>
    <dbReference type="NCBI Taxonomy" id="3702"/>
    <lineage>
        <taxon>Eukaryota</taxon>
        <taxon>Viridiplantae</taxon>
        <taxon>Streptophyta</taxon>
        <taxon>Embryophyta</taxon>
        <taxon>Tracheophyta</taxon>
        <taxon>Spermatophyta</taxon>
        <taxon>Magnoliopsida</taxon>
        <taxon>eudicotyledons</taxon>
        <taxon>Gunneridae</taxon>
        <taxon>Pentapetalae</taxon>
        <taxon>rosids</taxon>
        <taxon>malvids</taxon>
        <taxon>Brassicales</taxon>
        <taxon>Brassicaceae</taxon>
        <taxon>Camelineae</taxon>
        <taxon>Arabidopsis</taxon>
    </lineage>
</organism>
<proteinExistence type="evidence at transcript level"/>
<keyword id="KW-0067">ATP-binding</keyword>
<keyword id="KW-0325">Glycoprotein</keyword>
<keyword id="KW-0418">Kinase</keyword>
<keyword id="KW-0472">Membrane</keyword>
<keyword id="KW-0547">Nucleotide-binding</keyword>
<keyword id="KW-0597">Phosphoprotein</keyword>
<keyword id="KW-0675">Receptor</keyword>
<keyword id="KW-1185">Reference proteome</keyword>
<keyword id="KW-0723">Serine/threonine-protein kinase</keyword>
<keyword id="KW-0732">Signal</keyword>
<keyword id="KW-0808">Transferase</keyword>
<keyword id="KW-0812">Transmembrane</keyword>
<keyword id="KW-1133">Transmembrane helix</keyword>
<dbReference type="EC" id="2.7.11.1"/>
<dbReference type="EMBL" id="AC007152">
    <property type="status" value="NOT_ANNOTATED_CDS"/>
    <property type="molecule type" value="Genomic_DNA"/>
</dbReference>
<dbReference type="EMBL" id="CP002684">
    <property type="protein sequence ID" value="AEE34582.1"/>
    <property type="molecule type" value="Genomic_DNA"/>
</dbReference>
<dbReference type="EMBL" id="AK226799">
    <property type="status" value="NOT_ANNOTATED_CDS"/>
    <property type="molecule type" value="mRNA"/>
</dbReference>
<dbReference type="RefSeq" id="NP_176871.2">
    <property type="nucleotide sequence ID" value="NM_105370.3"/>
</dbReference>
<dbReference type="SMR" id="Q3ECH2"/>
<dbReference type="FunCoup" id="Q3ECH2">
    <property type="interactions" value="1"/>
</dbReference>
<dbReference type="STRING" id="3702.Q3ECH2"/>
<dbReference type="GlyCosmos" id="Q3ECH2">
    <property type="glycosylation" value="12 sites, No reported glycans"/>
</dbReference>
<dbReference type="GlyGen" id="Q3ECH2">
    <property type="glycosylation" value="12 sites"/>
</dbReference>
<dbReference type="iPTMnet" id="Q3ECH2"/>
<dbReference type="PaxDb" id="3702-AT1G67000.1"/>
<dbReference type="ProteomicsDB" id="238486"/>
<dbReference type="EnsemblPlants" id="AT1G67000.1">
    <property type="protein sequence ID" value="AT1G67000.1"/>
    <property type="gene ID" value="AT1G67000"/>
</dbReference>
<dbReference type="GeneID" id="843018"/>
<dbReference type="Gramene" id="AT1G67000.1">
    <property type="protein sequence ID" value="AT1G67000.1"/>
    <property type="gene ID" value="AT1G67000"/>
</dbReference>
<dbReference type="KEGG" id="ath:AT1G67000"/>
<dbReference type="Araport" id="AT1G67000"/>
<dbReference type="TAIR" id="AT1G67000"/>
<dbReference type="eggNOG" id="KOG1187">
    <property type="taxonomic scope" value="Eukaryota"/>
</dbReference>
<dbReference type="HOGENOM" id="CLU_000288_115_3_1"/>
<dbReference type="InParanoid" id="Q3ECH2"/>
<dbReference type="OMA" id="CYENSMR"/>
<dbReference type="PhylomeDB" id="Q3ECH2"/>
<dbReference type="PRO" id="PR:Q3ECH2"/>
<dbReference type="Proteomes" id="UP000006548">
    <property type="component" value="Chromosome 1"/>
</dbReference>
<dbReference type="ExpressionAtlas" id="Q3ECH2">
    <property type="expression patterns" value="baseline and differential"/>
</dbReference>
<dbReference type="GO" id="GO:0016020">
    <property type="term" value="C:membrane"/>
    <property type="evidence" value="ECO:0007669"/>
    <property type="project" value="UniProtKB-SubCell"/>
</dbReference>
<dbReference type="GO" id="GO:0005524">
    <property type="term" value="F:ATP binding"/>
    <property type="evidence" value="ECO:0007669"/>
    <property type="project" value="UniProtKB-KW"/>
</dbReference>
<dbReference type="GO" id="GO:0030247">
    <property type="term" value="F:polysaccharide binding"/>
    <property type="evidence" value="ECO:0007669"/>
    <property type="project" value="InterPro"/>
</dbReference>
<dbReference type="GO" id="GO:0106310">
    <property type="term" value="F:protein serine kinase activity"/>
    <property type="evidence" value="ECO:0007669"/>
    <property type="project" value="RHEA"/>
</dbReference>
<dbReference type="GO" id="GO:0004674">
    <property type="term" value="F:protein serine/threonine kinase activity"/>
    <property type="evidence" value="ECO:0007669"/>
    <property type="project" value="UniProtKB-KW"/>
</dbReference>
<dbReference type="FunFam" id="1.10.510.10:FF:000590">
    <property type="entry name" value="PR5-like receptor kinase"/>
    <property type="match status" value="1"/>
</dbReference>
<dbReference type="FunFam" id="3.30.200.20:FF:000644">
    <property type="entry name" value="Suppressor of npr1-1 constitutive 4"/>
    <property type="match status" value="1"/>
</dbReference>
<dbReference type="Gene3D" id="3.30.200.20">
    <property type="entry name" value="Phosphorylase Kinase, domain 1"/>
    <property type="match status" value="1"/>
</dbReference>
<dbReference type="Gene3D" id="1.10.510.10">
    <property type="entry name" value="Transferase(Phosphotransferase) domain 1"/>
    <property type="match status" value="1"/>
</dbReference>
<dbReference type="InterPro" id="IPR011009">
    <property type="entry name" value="Kinase-like_dom_sf"/>
</dbReference>
<dbReference type="InterPro" id="IPR045874">
    <property type="entry name" value="LRK10/LRL21-25-like"/>
</dbReference>
<dbReference type="InterPro" id="IPR000719">
    <property type="entry name" value="Prot_kinase_dom"/>
</dbReference>
<dbReference type="InterPro" id="IPR017441">
    <property type="entry name" value="Protein_kinase_ATP_BS"/>
</dbReference>
<dbReference type="InterPro" id="IPR001245">
    <property type="entry name" value="Ser-Thr/Tyr_kinase_cat_dom"/>
</dbReference>
<dbReference type="InterPro" id="IPR008271">
    <property type="entry name" value="Ser/Thr_kinase_AS"/>
</dbReference>
<dbReference type="InterPro" id="IPR032872">
    <property type="entry name" value="WAK_assoc_C"/>
</dbReference>
<dbReference type="InterPro" id="IPR025287">
    <property type="entry name" value="WAK_GUB"/>
</dbReference>
<dbReference type="PANTHER" id="PTHR27009">
    <property type="entry name" value="RUST RESISTANCE KINASE LR10-RELATED"/>
    <property type="match status" value="1"/>
</dbReference>
<dbReference type="Pfam" id="PF13947">
    <property type="entry name" value="GUB_WAK_bind"/>
    <property type="match status" value="2"/>
</dbReference>
<dbReference type="Pfam" id="PF07714">
    <property type="entry name" value="PK_Tyr_Ser-Thr"/>
    <property type="match status" value="1"/>
</dbReference>
<dbReference type="Pfam" id="PF14380">
    <property type="entry name" value="WAK_assoc"/>
    <property type="match status" value="2"/>
</dbReference>
<dbReference type="SMART" id="SM00220">
    <property type="entry name" value="S_TKc"/>
    <property type="match status" value="1"/>
</dbReference>
<dbReference type="SUPFAM" id="SSF56112">
    <property type="entry name" value="Protein kinase-like (PK-like)"/>
    <property type="match status" value="1"/>
</dbReference>
<dbReference type="PROSITE" id="PS00107">
    <property type="entry name" value="PROTEIN_KINASE_ATP"/>
    <property type="match status" value="1"/>
</dbReference>
<dbReference type="PROSITE" id="PS50011">
    <property type="entry name" value="PROTEIN_KINASE_DOM"/>
    <property type="match status" value="1"/>
</dbReference>
<dbReference type="PROSITE" id="PS00108">
    <property type="entry name" value="PROTEIN_KINASE_ST"/>
    <property type="match status" value="1"/>
</dbReference>
<feature type="signal peptide" evidence="2">
    <location>
        <begin position="1"/>
        <end position="27"/>
    </location>
</feature>
<feature type="chain" id="PRO_0000401358" description="LEAF RUST 10 DISEASE-RESISTANCE LOCUS RECEPTOR-LIKE PROTEIN KINASE-like 2.8">
    <location>
        <begin position="28"/>
        <end position="892"/>
    </location>
</feature>
<feature type="topological domain" description="Extracellular" evidence="2">
    <location>
        <begin position="28"/>
        <end position="496"/>
    </location>
</feature>
<feature type="transmembrane region" description="Helical" evidence="2">
    <location>
        <begin position="497"/>
        <end position="517"/>
    </location>
</feature>
<feature type="topological domain" description="Cytoplasmic" evidence="2">
    <location>
        <begin position="518"/>
        <end position="892"/>
    </location>
</feature>
<feature type="domain" description="Protein kinase" evidence="3">
    <location>
        <begin position="556"/>
        <end position="854"/>
    </location>
</feature>
<feature type="active site" description="Proton acceptor" evidence="3 4">
    <location>
        <position position="680"/>
    </location>
</feature>
<feature type="binding site" evidence="3">
    <location>
        <begin position="562"/>
        <end position="570"/>
    </location>
    <ligand>
        <name>ATP</name>
        <dbReference type="ChEBI" id="CHEBI:30616"/>
    </ligand>
</feature>
<feature type="binding site" evidence="3">
    <location>
        <position position="584"/>
    </location>
    <ligand>
        <name>ATP</name>
        <dbReference type="ChEBI" id="CHEBI:30616"/>
    </ligand>
</feature>
<feature type="modified residue" description="Phosphothreonine" evidence="1">
    <location>
        <position position="547"/>
    </location>
</feature>
<feature type="modified residue" description="Phosphotyrosine" evidence="1">
    <location>
        <position position="629"/>
    </location>
</feature>
<feature type="modified residue" description="Phosphothreonine" evidence="1">
    <location>
        <position position="717"/>
    </location>
</feature>
<feature type="modified residue" description="Phosphothreonine" evidence="1">
    <location>
        <position position="720"/>
    </location>
</feature>
<feature type="glycosylation site" description="N-linked (GlcNAc...) asparagine" evidence="2">
    <location>
        <position position="42"/>
    </location>
</feature>
<feature type="glycosylation site" description="N-linked (GlcNAc...) asparagine" evidence="2">
    <location>
        <position position="71"/>
    </location>
</feature>
<feature type="glycosylation site" description="N-linked (GlcNAc...) asparagine" evidence="2">
    <location>
        <position position="88"/>
    </location>
</feature>
<feature type="glycosylation site" description="N-linked (GlcNAc...) asparagine" evidence="2">
    <location>
        <position position="112"/>
    </location>
</feature>
<feature type="glycosylation site" description="N-linked (GlcNAc...) asparagine" evidence="2">
    <location>
        <position position="186"/>
    </location>
</feature>
<feature type="glycosylation site" description="N-linked (GlcNAc...) asparagine" evidence="2">
    <location>
        <position position="222"/>
    </location>
</feature>
<feature type="glycosylation site" description="N-linked (GlcNAc...) asparagine" evidence="2">
    <location>
        <position position="230"/>
    </location>
</feature>
<feature type="glycosylation site" description="N-linked (GlcNAc...) asparagine" evidence="2">
    <location>
        <position position="286"/>
    </location>
</feature>
<feature type="glycosylation site" description="N-linked (GlcNAc...) asparagine" evidence="2">
    <location>
        <position position="358"/>
    </location>
</feature>
<feature type="glycosylation site" description="N-linked (GlcNAc...) asparagine" evidence="2">
    <location>
        <position position="384"/>
    </location>
</feature>
<feature type="glycosylation site" description="N-linked (GlcNAc...) asparagine" evidence="2">
    <location>
        <position position="407"/>
    </location>
</feature>
<feature type="glycosylation site" description="N-linked (GlcNAc...) asparagine" evidence="2">
    <location>
        <position position="458"/>
    </location>
</feature>
<feature type="sequence conflict" description="In Ref. 3; AK226799." evidence="6" ref="3">
    <original>C</original>
    <variation>R</variation>
    <location>
        <position position="620"/>
    </location>
</feature>
<feature type="sequence conflict" description="In Ref. 3; AK226799." evidence="6" ref="3">
    <original>L</original>
    <variation>Q</variation>
    <location>
        <position position="654"/>
    </location>
</feature>
<reference key="1">
    <citation type="journal article" date="2000" name="Nature">
        <title>Sequence and analysis of chromosome 1 of the plant Arabidopsis thaliana.</title>
        <authorList>
            <person name="Theologis A."/>
            <person name="Ecker J.R."/>
            <person name="Palm C.J."/>
            <person name="Federspiel N.A."/>
            <person name="Kaul S."/>
            <person name="White O."/>
            <person name="Alonso J."/>
            <person name="Altafi H."/>
            <person name="Araujo R."/>
            <person name="Bowman C.L."/>
            <person name="Brooks S.Y."/>
            <person name="Buehler E."/>
            <person name="Chan A."/>
            <person name="Chao Q."/>
            <person name="Chen H."/>
            <person name="Cheuk R.F."/>
            <person name="Chin C.W."/>
            <person name="Chung M.K."/>
            <person name="Conn L."/>
            <person name="Conway A.B."/>
            <person name="Conway A.R."/>
            <person name="Creasy T.H."/>
            <person name="Dewar K."/>
            <person name="Dunn P."/>
            <person name="Etgu P."/>
            <person name="Feldblyum T.V."/>
            <person name="Feng J.-D."/>
            <person name="Fong B."/>
            <person name="Fujii C.Y."/>
            <person name="Gill J.E."/>
            <person name="Goldsmith A.D."/>
            <person name="Haas B."/>
            <person name="Hansen N.F."/>
            <person name="Hughes B."/>
            <person name="Huizar L."/>
            <person name="Hunter J.L."/>
            <person name="Jenkins J."/>
            <person name="Johnson-Hopson C."/>
            <person name="Khan S."/>
            <person name="Khaykin E."/>
            <person name="Kim C.J."/>
            <person name="Koo H.L."/>
            <person name="Kremenetskaia I."/>
            <person name="Kurtz D.B."/>
            <person name="Kwan A."/>
            <person name="Lam B."/>
            <person name="Langin-Hooper S."/>
            <person name="Lee A."/>
            <person name="Lee J.M."/>
            <person name="Lenz C.A."/>
            <person name="Li J.H."/>
            <person name="Li Y.-P."/>
            <person name="Lin X."/>
            <person name="Liu S.X."/>
            <person name="Liu Z.A."/>
            <person name="Luros J.S."/>
            <person name="Maiti R."/>
            <person name="Marziali A."/>
            <person name="Militscher J."/>
            <person name="Miranda M."/>
            <person name="Nguyen M."/>
            <person name="Nierman W.C."/>
            <person name="Osborne B.I."/>
            <person name="Pai G."/>
            <person name="Peterson J."/>
            <person name="Pham P.K."/>
            <person name="Rizzo M."/>
            <person name="Rooney T."/>
            <person name="Rowley D."/>
            <person name="Sakano H."/>
            <person name="Salzberg S.L."/>
            <person name="Schwartz J.R."/>
            <person name="Shinn P."/>
            <person name="Southwick A.M."/>
            <person name="Sun H."/>
            <person name="Tallon L.J."/>
            <person name="Tambunga G."/>
            <person name="Toriumi M.J."/>
            <person name="Town C.D."/>
            <person name="Utterback T."/>
            <person name="Van Aken S."/>
            <person name="Vaysberg M."/>
            <person name="Vysotskaia V.S."/>
            <person name="Walker M."/>
            <person name="Wu D."/>
            <person name="Yu G."/>
            <person name="Fraser C.M."/>
            <person name="Venter J.C."/>
            <person name="Davis R.W."/>
        </authorList>
    </citation>
    <scope>NUCLEOTIDE SEQUENCE [LARGE SCALE GENOMIC DNA]</scope>
    <source>
        <strain>cv. Columbia</strain>
    </source>
</reference>
<reference key="2">
    <citation type="journal article" date="2017" name="Plant J.">
        <title>Araport11: a complete reannotation of the Arabidopsis thaliana reference genome.</title>
        <authorList>
            <person name="Cheng C.Y."/>
            <person name="Krishnakumar V."/>
            <person name="Chan A.P."/>
            <person name="Thibaud-Nissen F."/>
            <person name="Schobel S."/>
            <person name="Town C.D."/>
        </authorList>
    </citation>
    <scope>GENOME REANNOTATION</scope>
    <source>
        <strain>cv. Columbia</strain>
    </source>
</reference>
<reference key="3">
    <citation type="submission" date="2006-07" db="EMBL/GenBank/DDBJ databases">
        <title>Large-scale analysis of RIKEN Arabidopsis full-length (RAFL) cDNAs.</title>
        <authorList>
            <person name="Totoki Y."/>
            <person name="Seki M."/>
            <person name="Ishida J."/>
            <person name="Nakajima M."/>
            <person name="Enju A."/>
            <person name="Kamiya A."/>
            <person name="Narusaka M."/>
            <person name="Shin-i T."/>
            <person name="Nakagawa M."/>
            <person name="Sakamoto N."/>
            <person name="Oishi K."/>
            <person name="Kohara Y."/>
            <person name="Kobayashi M."/>
            <person name="Toyoda A."/>
            <person name="Sakaki Y."/>
            <person name="Sakurai T."/>
            <person name="Iida K."/>
            <person name="Akiyama K."/>
            <person name="Satou M."/>
            <person name="Toyoda T."/>
            <person name="Konagaya A."/>
            <person name="Carninci P."/>
            <person name="Kawai J."/>
            <person name="Hayashizaki Y."/>
            <person name="Shinozaki K."/>
        </authorList>
    </citation>
    <scope>NUCLEOTIDE SEQUENCE [LARGE SCALE MRNA]</scope>
    <source>
        <strain>cv. Columbia</strain>
    </source>
</reference>
<reference key="4">
    <citation type="journal article" date="2001" name="Proc. Natl. Acad. Sci. U.S.A.">
        <title>Receptor-like kinases from Arabidopsis form a monophyletic gene family related to animal receptor kinases.</title>
        <authorList>
            <person name="Shiu S.H."/>
            <person name="Bleecker A.B."/>
        </authorList>
    </citation>
    <scope>GENE FAMILY</scope>
</reference>
<reference key="5">
    <citation type="journal article" date="2003" name="Plant Physiol.">
        <title>Expansion of the receptor-like kinase/Pelle gene family and receptor-like proteins in Arabidopsis.</title>
        <authorList>
            <person name="Shiu S.H."/>
            <person name="Bleecker A.B."/>
        </authorList>
    </citation>
    <scope>GENE FAMILY</scope>
</reference>